<dbReference type="EMBL" id="CP000051">
    <property type="protein sequence ID" value="AAX50500.1"/>
    <property type="molecule type" value="Genomic_DNA"/>
</dbReference>
<dbReference type="RefSeq" id="WP_009871587.1">
    <property type="nucleotide sequence ID" value="NC_007429.1"/>
</dbReference>
<dbReference type="SMR" id="Q3KMC2"/>
<dbReference type="KEGG" id="cta:CTA_0262"/>
<dbReference type="HOGENOM" id="CLU_060739_1_1_0"/>
<dbReference type="Proteomes" id="UP000002532">
    <property type="component" value="Chromosome"/>
</dbReference>
<dbReference type="GO" id="GO:0003677">
    <property type="term" value="F:DNA binding"/>
    <property type="evidence" value="ECO:0007669"/>
    <property type="project" value="UniProtKB-UniRule"/>
</dbReference>
<dbReference type="GO" id="GO:0008270">
    <property type="term" value="F:zinc ion binding"/>
    <property type="evidence" value="ECO:0007669"/>
    <property type="project" value="UniProtKB-KW"/>
</dbReference>
<dbReference type="GO" id="GO:0006310">
    <property type="term" value="P:DNA recombination"/>
    <property type="evidence" value="ECO:0007669"/>
    <property type="project" value="UniProtKB-UniRule"/>
</dbReference>
<dbReference type="GO" id="GO:0006281">
    <property type="term" value="P:DNA repair"/>
    <property type="evidence" value="ECO:0007669"/>
    <property type="project" value="UniProtKB-UniRule"/>
</dbReference>
<dbReference type="CDD" id="cd01025">
    <property type="entry name" value="TOPRIM_recR"/>
    <property type="match status" value="1"/>
</dbReference>
<dbReference type="Gene3D" id="3.40.1360.10">
    <property type="match status" value="1"/>
</dbReference>
<dbReference type="Gene3D" id="1.10.8.420">
    <property type="entry name" value="RecR Domain 1"/>
    <property type="match status" value="1"/>
</dbReference>
<dbReference type="HAMAP" id="MF_00017">
    <property type="entry name" value="RecR"/>
    <property type="match status" value="1"/>
</dbReference>
<dbReference type="InterPro" id="IPR000093">
    <property type="entry name" value="DNA_Rcmb_RecR"/>
</dbReference>
<dbReference type="InterPro" id="IPR023627">
    <property type="entry name" value="Rcmb_RecR"/>
</dbReference>
<dbReference type="InterPro" id="IPR015967">
    <property type="entry name" value="Rcmb_RecR_Znf"/>
</dbReference>
<dbReference type="InterPro" id="IPR006171">
    <property type="entry name" value="TOPRIM_dom"/>
</dbReference>
<dbReference type="InterPro" id="IPR034137">
    <property type="entry name" value="TOPRIM_RecR"/>
</dbReference>
<dbReference type="NCBIfam" id="TIGR00615">
    <property type="entry name" value="recR"/>
    <property type="match status" value="1"/>
</dbReference>
<dbReference type="PANTHER" id="PTHR30446">
    <property type="entry name" value="RECOMBINATION PROTEIN RECR"/>
    <property type="match status" value="1"/>
</dbReference>
<dbReference type="PANTHER" id="PTHR30446:SF0">
    <property type="entry name" value="RECOMBINATION PROTEIN RECR"/>
    <property type="match status" value="1"/>
</dbReference>
<dbReference type="Pfam" id="PF21175">
    <property type="entry name" value="RecR_C"/>
    <property type="match status" value="1"/>
</dbReference>
<dbReference type="Pfam" id="PF21176">
    <property type="entry name" value="RecR_HhH"/>
    <property type="match status" value="1"/>
</dbReference>
<dbReference type="Pfam" id="PF13662">
    <property type="entry name" value="Toprim_4"/>
    <property type="match status" value="1"/>
</dbReference>
<dbReference type="SMART" id="SM00493">
    <property type="entry name" value="TOPRIM"/>
    <property type="match status" value="1"/>
</dbReference>
<dbReference type="SUPFAM" id="SSF111304">
    <property type="entry name" value="Recombination protein RecR"/>
    <property type="match status" value="1"/>
</dbReference>
<dbReference type="PROSITE" id="PS01300">
    <property type="entry name" value="RECR"/>
    <property type="match status" value="1"/>
</dbReference>
<dbReference type="PROSITE" id="PS50880">
    <property type="entry name" value="TOPRIM"/>
    <property type="match status" value="1"/>
</dbReference>
<protein>
    <recommendedName>
        <fullName evidence="1">Recombination protein RecR</fullName>
    </recommendedName>
</protein>
<accession>Q3KMC2</accession>
<name>RECR_CHLTA</name>
<gene>
    <name evidence="1" type="primary">recR</name>
    <name type="ordered locus">CTA_0262</name>
</gene>
<organism>
    <name type="scientific">Chlamydia trachomatis serovar A (strain ATCC VR-571B / DSM 19440 / HAR-13)</name>
    <dbReference type="NCBI Taxonomy" id="315277"/>
    <lineage>
        <taxon>Bacteria</taxon>
        <taxon>Pseudomonadati</taxon>
        <taxon>Chlamydiota</taxon>
        <taxon>Chlamydiia</taxon>
        <taxon>Chlamydiales</taxon>
        <taxon>Chlamydiaceae</taxon>
        <taxon>Chlamydia/Chlamydophila group</taxon>
        <taxon>Chlamydia</taxon>
    </lineage>
</organism>
<comment type="function">
    <text evidence="1">May play a role in DNA repair. It seems to be involved in an RecBC-independent recombinational process of DNA repair. It may act with RecF and RecO.</text>
</comment>
<comment type="similarity">
    <text evidence="1">Belongs to the RecR family.</text>
</comment>
<proteinExistence type="inferred from homology"/>
<reference key="1">
    <citation type="journal article" date="2005" name="Infect. Immun.">
        <title>Comparative genomic analysis of Chlamydia trachomatis oculotropic and genitotropic strains.</title>
        <authorList>
            <person name="Carlson J.H."/>
            <person name="Porcella S.F."/>
            <person name="McClarty G."/>
            <person name="Caldwell H.D."/>
        </authorList>
    </citation>
    <scope>NUCLEOTIDE SEQUENCE [LARGE SCALE GENOMIC DNA]</scope>
    <source>
        <strain>ATCC VR-571B / DSM 19440 / HAR-13</strain>
    </source>
</reference>
<sequence>MLKYPDYISKLISFLKKLPGIGFKSAEKIAFELLEWDPSQIEAMAQALQEFSTSHATCSNCFCLKISQTSPCNFCSESRDSSSLCIVATPKDVFALEKSKIFKGHYFVLGNLLSPITGKHLSLEKLAILKQRIEACSPKEMIIALDATLEGDATALFLKQEFSYLPIKISRLALGMPVGLSFDFVDANTLARAFSGRNCF</sequence>
<evidence type="ECO:0000255" key="1">
    <source>
        <dbReference type="HAMAP-Rule" id="MF_00017"/>
    </source>
</evidence>
<keyword id="KW-0227">DNA damage</keyword>
<keyword id="KW-0233">DNA recombination</keyword>
<keyword id="KW-0234">DNA repair</keyword>
<keyword id="KW-0479">Metal-binding</keyword>
<keyword id="KW-0862">Zinc</keyword>
<keyword id="KW-0863">Zinc-finger</keyword>
<feature type="chain" id="PRO_1000001524" description="Recombination protein RecR">
    <location>
        <begin position="1"/>
        <end position="200"/>
    </location>
</feature>
<feature type="domain" description="Toprim" evidence="1">
    <location>
        <begin position="82"/>
        <end position="177"/>
    </location>
</feature>
<feature type="zinc finger region" description="C4-type" evidence="1">
    <location>
        <begin position="58"/>
        <end position="75"/>
    </location>
</feature>